<keyword id="KW-0963">Cytoplasm</keyword>
<keyword id="KW-0274">FAD</keyword>
<keyword id="KW-0285">Flavoprotein</keyword>
<keyword id="KW-0520">NAD</keyword>
<keyword id="KW-0819">tRNA processing</keyword>
<accession>Q2NQ95</accession>
<sequence>MFYPDHFDVIIIGGGHAGTEAAMASARMGCQTLLLTHNIDTLGQMSCNPAIGGIGKGHLVKEIDAMGGLMAQAIDKGGIQFRILNASKGPAVRATRAQADRVLYRQAVRGALENQPNLMIFQQAVEDLIMEGDRVVGAVTQIGLKFRARAVVLTVGTFLDGKIHIGMDHYSGGRAGDPPSVSLSRRLRELPFRVNRLKTGTPPRIDAHSIDFSRLATQHGDDPLPVFSFLGSADQHPRQIPCYITYTNDKTHEVIRQNLDRSPMYAGIIEGVGPRYCPSIEDKVMRFADRDAHQIFLEPEGLTSNEIYPNGISTSLPFDVQMKIVHSMQGLENARIVRPGYAIEYDFFDPRDLKLTLESKLIEGLFFAGQINGTTGYEEAAAQGMLAGLNAARLAMGKDGWSPRRDQAYLGVLVDDLCTLGTKEPYRMFTSRAEYRLLLREDNADLRLTETGRQLGMVDDVRWERFCAKQEQIERERQRLRDIWVHPGSDGVEQLNPLLKASLTREANGEELLRRPEMDYARLTHLERFGPALVDSQAAEQVEIQIKYQGYIARQQEEIARQMRNEHTLLPAAMDFSTVSGLSNEVIAKLNDHKPNSIGQASRISGVTPAAISILLVWLKKQGLRHRSP</sequence>
<dbReference type="EMBL" id="AP008232">
    <property type="protein sequence ID" value="BAE75680.1"/>
    <property type="molecule type" value="Genomic_DNA"/>
</dbReference>
<dbReference type="RefSeq" id="WP_011412211.1">
    <property type="nucleotide sequence ID" value="NC_007712.1"/>
</dbReference>
<dbReference type="SMR" id="Q2NQ95"/>
<dbReference type="STRING" id="343509.SG2405"/>
<dbReference type="KEGG" id="sgl:SG2405"/>
<dbReference type="eggNOG" id="COG0445">
    <property type="taxonomic scope" value="Bacteria"/>
</dbReference>
<dbReference type="HOGENOM" id="CLU_007831_2_2_6"/>
<dbReference type="OrthoDB" id="9815560at2"/>
<dbReference type="BioCyc" id="SGLO343509:SGP1_RS21840-MONOMER"/>
<dbReference type="Proteomes" id="UP000001932">
    <property type="component" value="Chromosome"/>
</dbReference>
<dbReference type="GO" id="GO:0005829">
    <property type="term" value="C:cytosol"/>
    <property type="evidence" value="ECO:0007669"/>
    <property type="project" value="TreeGrafter"/>
</dbReference>
<dbReference type="GO" id="GO:0050660">
    <property type="term" value="F:flavin adenine dinucleotide binding"/>
    <property type="evidence" value="ECO:0007669"/>
    <property type="project" value="UniProtKB-UniRule"/>
</dbReference>
<dbReference type="GO" id="GO:0030488">
    <property type="term" value="P:tRNA methylation"/>
    <property type="evidence" value="ECO:0007669"/>
    <property type="project" value="TreeGrafter"/>
</dbReference>
<dbReference type="GO" id="GO:0002098">
    <property type="term" value="P:tRNA wobble uridine modification"/>
    <property type="evidence" value="ECO:0007669"/>
    <property type="project" value="InterPro"/>
</dbReference>
<dbReference type="FunFam" id="1.10.10.1800:FF:000001">
    <property type="entry name" value="tRNA uridine 5-carboxymethylaminomethyl modification enzyme MnmG"/>
    <property type="match status" value="1"/>
</dbReference>
<dbReference type="FunFam" id="1.10.150.570:FF:000001">
    <property type="entry name" value="tRNA uridine 5-carboxymethylaminomethyl modification enzyme MnmG"/>
    <property type="match status" value="1"/>
</dbReference>
<dbReference type="FunFam" id="3.50.50.60:FF:000002">
    <property type="entry name" value="tRNA uridine 5-carboxymethylaminomethyl modification enzyme MnmG"/>
    <property type="match status" value="1"/>
</dbReference>
<dbReference type="FunFam" id="3.50.50.60:FF:000010">
    <property type="entry name" value="tRNA uridine 5-carboxymethylaminomethyl modification enzyme MnmG"/>
    <property type="match status" value="1"/>
</dbReference>
<dbReference type="Gene3D" id="3.50.50.60">
    <property type="entry name" value="FAD/NAD(P)-binding domain"/>
    <property type="match status" value="2"/>
</dbReference>
<dbReference type="Gene3D" id="1.10.150.570">
    <property type="entry name" value="GidA associated domain, C-terminal subdomain"/>
    <property type="match status" value="1"/>
</dbReference>
<dbReference type="Gene3D" id="1.10.10.1800">
    <property type="entry name" value="tRNA uridine 5-carboxymethylaminomethyl modification enzyme MnmG/GidA"/>
    <property type="match status" value="1"/>
</dbReference>
<dbReference type="HAMAP" id="MF_00129">
    <property type="entry name" value="MnmG_GidA"/>
    <property type="match status" value="1"/>
</dbReference>
<dbReference type="InterPro" id="IPR036188">
    <property type="entry name" value="FAD/NAD-bd_sf"/>
</dbReference>
<dbReference type="InterPro" id="IPR049312">
    <property type="entry name" value="GIDA_C_N"/>
</dbReference>
<dbReference type="InterPro" id="IPR004416">
    <property type="entry name" value="MnmG"/>
</dbReference>
<dbReference type="InterPro" id="IPR002218">
    <property type="entry name" value="MnmG-rel"/>
</dbReference>
<dbReference type="InterPro" id="IPR020595">
    <property type="entry name" value="MnmG-rel_CS"/>
</dbReference>
<dbReference type="InterPro" id="IPR026904">
    <property type="entry name" value="MnmG_C"/>
</dbReference>
<dbReference type="InterPro" id="IPR047001">
    <property type="entry name" value="MnmG_C_subdom"/>
</dbReference>
<dbReference type="InterPro" id="IPR044920">
    <property type="entry name" value="MnmG_C_subdom_sf"/>
</dbReference>
<dbReference type="InterPro" id="IPR040131">
    <property type="entry name" value="MnmG_N"/>
</dbReference>
<dbReference type="NCBIfam" id="TIGR00136">
    <property type="entry name" value="mnmG_gidA"/>
    <property type="match status" value="1"/>
</dbReference>
<dbReference type="PANTHER" id="PTHR11806">
    <property type="entry name" value="GLUCOSE INHIBITED DIVISION PROTEIN A"/>
    <property type="match status" value="1"/>
</dbReference>
<dbReference type="PANTHER" id="PTHR11806:SF0">
    <property type="entry name" value="PROTEIN MTO1 HOMOLOG, MITOCHONDRIAL"/>
    <property type="match status" value="1"/>
</dbReference>
<dbReference type="Pfam" id="PF01134">
    <property type="entry name" value="GIDA"/>
    <property type="match status" value="1"/>
</dbReference>
<dbReference type="Pfam" id="PF21680">
    <property type="entry name" value="GIDA_C_1st"/>
    <property type="match status" value="1"/>
</dbReference>
<dbReference type="Pfam" id="PF13932">
    <property type="entry name" value="SAM_GIDA_C"/>
    <property type="match status" value="1"/>
</dbReference>
<dbReference type="SMART" id="SM01228">
    <property type="entry name" value="GIDA_assoc_3"/>
    <property type="match status" value="1"/>
</dbReference>
<dbReference type="SUPFAM" id="SSF51905">
    <property type="entry name" value="FAD/NAD(P)-binding domain"/>
    <property type="match status" value="1"/>
</dbReference>
<dbReference type="PROSITE" id="PS01280">
    <property type="entry name" value="GIDA_1"/>
    <property type="match status" value="1"/>
</dbReference>
<dbReference type="PROSITE" id="PS01281">
    <property type="entry name" value="GIDA_2"/>
    <property type="match status" value="1"/>
</dbReference>
<name>MNMG_SODGM</name>
<reference key="1">
    <citation type="journal article" date="2006" name="Genome Res.">
        <title>Massive genome erosion and functional adaptations provide insights into the symbiotic lifestyle of Sodalis glossinidius in the tsetse host.</title>
        <authorList>
            <person name="Toh H."/>
            <person name="Weiss B.L."/>
            <person name="Perkin S.A.H."/>
            <person name="Yamashita A."/>
            <person name="Oshima K."/>
            <person name="Hattori M."/>
            <person name="Aksoy S."/>
        </authorList>
    </citation>
    <scope>NUCLEOTIDE SEQUENCE [LARGE SCALE GENOMIC DNA]</scope>
    <source>
        <strain>morsitans</strain>
    </source>
</reference>
<proteinExistence type="inferred from homology"/>
<feature type="chain" id="PRO_0000345335" description="tRNA uridine 5-carboxymethylaminomethyl modification enzyme MnmG">
    <location>
        <begin position="1"/>
        <end position="629"/>
    </location>
</feature>
<feature type="binding site" evidence="1">
    <location>
        <begin position="13"/>
        <end position="18"/>
    </location>
    <ligand>
        <name>FAD</name>
        <dbReference type="ChEBI" id="CHEBI:57692"/>
    </ligand>
</feature>
<feature type="binding site" evidence="1">
    <location>
        <position position="125"/>
    </location>
    <ligand>
        <name>FAD</name>
        <dbReference type="ChEBI" id="CHEBI:57692"/>
    </ligand>
</feature>
<feature type="binding site" evidence="1">
    <location>
        <position position="180"/>
    </location>
    <ligand>
        <name>FAD</name>
        <dbReference type="ChEBI" id="CHEBI:57692"/>
    </ligand>
</feature>
<feature type="binding site" evidence="1">
    <location>
        <begin position="273"/>
        <end position="287"/>
    </location>
    <ligand>
        <name>NAD(+)</name>
        <dbReference type="ChEBI" id="CHEBI:57540"/>
    </ligand>
</feature>
<feature type="binding site" evidence="1">
    <location>
        <position position="370"/>
    </location>
    <ligand>
        <name>FAD</name>
        <dbReference type="ChEBI" id="CHEBI:57692"/>
    </ligand>
</feature>
<organism>
    <name type="scientific">Sodalis glossinidius (strain morsitans)</name>
    <dbReference type="NCBI Taxonomy" id="343509"/>
    <lineage>
        <taxon>Bacteria</taxon>
        <taxon>Pseudomonadati</taxon>
        <taxon>Pseudomonadota</taxon>
        <taxon>Gammaproteobacteria</taxon>
        <taxon>Enterobacterales</taxon>
        <taxon>Bruguierivoracaceae</taxon>
        <taxon>Sodalis</taxon>
    </lineage>
</organism>
<gene>
    <name evidence="1" type="primary">mnmG</name>
    <name evidence="1" type="synonym">gidA</name>
    <name type="ordered locus">SG2405</name>
</gene>
<protein>
    <recommendedName>
        <fullName evidence="1">tRNA uridine 5-carboxymethylaminomethyl modification enzyme MnmG</fullName>
    </recommendedName>
    <alternativeName>
        <fullName evidence="1">Glucose-inhibited division protein A</fullName>
    </alternativeName>
</protein>
<evidence type="ECO:0000255" key="1">
    <source>
        <dbReference type="HAMAP-Rule" id="MF_00129"/>
    </source>
</evidence>
<comment type="function">
    <text evidence="1">NAD-binding protein involved in the addition of a carboxymethylaminomethyl (cmnm) group at the wobble position (U34) of certain tRNAs, forming tRNA-cmnm(5)s(2)U34.</text>
</comment>
<comment type="cofactor">
    <cofactor evidence="1">
        <name>FAD</name>
        <dbReference type="ChEBI" id="CHEBI:57692"/>
    </cofactor>
</comment>
<comment type="subunit">
    <text evidence="1">Homodimer. Heterotetramer of two MnmE and two MnmG subunits.</text>
</comment>
<comment type="subcellular location">
    <subcellularLocation>
        <location evidence="1">Cytoplasm</location>
    </subcellularLocation>
</comment>
<comment type="similarity">
    <text evidence="1">Belongs to the MnmG family.</text>
</comment>